<name>KAD_TREPA</name>
<proteinExistence type="inferred from homology"/>
<evidence type="ECO:0000255" key="1">
    <source>
        <dbReference type="HAMAP-Rule" id="MF_00235"/>
    </source>
</evidence>
<reference key="1">
    <citation type="journal article" date="1998" name="Science">
        <title>Complete genome sequence of Treponema pallidum, the syphilis spirochete.</title>
        <authorList>
            <person name="Fraser C.M."/>
            <person name="Norris S.J."/>
            <person name="Weinstock G.M."/>
            <person name="White O."/>
            <person name="Sutton G.G."/>
            <person name="Dodson R.J."/>
            <person name="Gwinn M.L."/>
            <person name="Hickey E.K."/>
            <person name="Clayton R.A."/>
            <person name="Ketchum K.A."/>
            <person name="Sodergren E."/>
            <person name="Hardham J.M."/>
            <person name="McLeod M.P."/>
            <person name="Salzberg S.L."/>
            <person name="Peterson J.D."/>
            <person name="Khalak H.G."/>
            <person name="Richardson D.L."/>
            <person name="Howell J.K."/>
            <person name="Chidambaram M."/>
            <person name="Utterback T.R."/>
            <person name="McDonald L.A."/>
            <person name="Artiach P."/>
            <person name="Bowman C."/>
            <person name="Cotton M.D."/>
            <person name="Fujii C."/>
            <person name="Garland S.A."/>
            <person name="Hatch B."/>
            <person name="Horst K."/>
            <person name="Roberts K.M."/>
            <person name="Sandusky M."/>
            <person name="Weidman J.F."/>
            <person name="Smith H.O."/>
            <person name="Venter J.C."/>
        </authorList>
    </citation>
    <scope>NUCLEOTIDE SEQUENCE [LARGE SCALE GENOMIC DNA]</scope>
    <source>
        <strain>Nichols</strain>
    </source>
</reference>
<dbReference type="EC" id="2.7.4.3" evidence="1"/>
<dbReference type="EMBL" id="AE000520">
    <property type="protein sequence ID" value="AAC65567.1"/>
    <property type="molecule type" value="Genomic_DNA"/>
</dbReference>
<dbReference type="PIR" id="D71306">
    <property type="entry name" value="D71306"/>
</dbReference>
<dbReference type="RefSeq" id="WP_010882041.1">
    <property type="nucleotide sequence ID" value="NC_021490.2"/>
</dbReference>
<dbReference type="SMR" id="O83604"/>
<dbReference type="STRING" id="243276.TP_0595"/>
<dbReference type="EnsemblBacteria" id="AAC65567">
    <property type="protein sequence ID" value="AAC65567"/>
    <property type="gene ID" value="TP_0595"/>
</dbReference>
<dbReference type="KEGG" id="tpa:TP_0595"/>
<dbReference type="KEGG" id="tpw:TPANIC_0595"/>
<dbReference type="eggNOG" id="COG0563">
    <property type="taxonomic scope" value="Bacteria"/>
</dbReference>
<dbReference type="HOGENOM" id="CLU_032354_1_2_12"/>
<dbReference type="OrthoDB" id="9805030at2"/>
<dbReference type="UniPathway" id="UPA00588">
    <property type="reaction ID" value="UER00649"/>
</dbReference>
<dbReference type="Proteomes" id="UP000000811">
    <property type="component" value="Chromosome"/>
</dbReference>
<dbReference type="GO" id="GO:0005737">
    <property type="term" value="C:cytoplasm"/>
    <property type="evidence" value="ECO:0007669"/>
    <property type="project" value="UniProtKB-SubCell"/>
</dbReference>
<dbReference type="GO" id="GO:0004017">
    <property type="term" value="F:adenylate kinase activity"/>
    <property type="evidence" value="ECO:0007669"/>
    <property type="project" value="UniProtKB-UniRule"/>
</dbReference>
<dbReference type="GO" id="GO:0005524">
    <property type="term" value="F:ATP binding"/>
    <property type="evidence" value="ECO:0007669"/>
    <property type="project" value="UniProtKB-UniRule"/>
</dbReference>
<dbReference type="GO" id="GO:0008270">
    <property type="term" value="F:zinc ion binding"/>
    <property type="evidence" value="ECO:0007669"/>
    <property type="project" value="UniProtKB-UniRule"/>
</dbReference>
<dbReference type="GO" id="GO:0044209">
    <property type="term" value="P:AMP salvage"/>
    <property type="evidence" value="ECO:0007669"/>
    <property type="project" value="UniProtKB-UniRule"/>
</dbReference>
<dbReference type="CDD" id="cd01428">
    <property type="entry name" value="ADK"/>
    <property type="match status" value="1"/>
</dbReference>
<dbReference type="FunFam" id="3.40.50.300:FF:000106">
    <property type="entry name" value="Adenylate kinase mitochondrial"/>
    <property type="match status" value="1"/>
</dbReference>
<dbReference type="Gene3D" id="3.40.50.300">
    <property type="entry name" value="P-loop containing nucleotide triphosphate hydrolases"/>
    <property type="match status" value="1"/>
</dbReference>
<dbReference type="HAMAP" id="MF_00235">
    <property type="entry name" value="Adenylate_kinase_Adk"/>
    <property type="match status" value="1"/>
</dbReference>
<dbReference type="InterPro" id="IPR006259">
    <property type="entry name" value="Adenyl_kin_sub"/>
</dbReference>
<dbReference type="InterPro" id="IPR000850">
    <property type="entry name" value="Adenylat/UMP-CMP_kin"/>
</dbReference>
<dbReference type="InterPro" id="IPR033690">
    <property type="entry name" value="Adenylat_kinase_CS"/>
</dbReference>
<dbReference type="InterPro" id="IPR007862">
    <property type="entry name" value="Adenylate_kinase_lid-dom"/>
</dbReference>
<dbReference type="InterPro" id="IPR027417">
    <property type="entry name" value="P-loop_NTPase"/>
</dbReference>
<dbReference type="NCBIfam" id="TIGR01351">
    <property type="entry name" value="adk"/>
    <property type="match status" value="1"/>
</dbReference>
<dbReference type="PANTHER" id="PTHR23359">
    <property type="entry name" value="NUCLEOTIDE KINASE"/>
    <property type="match status" value="1"/>
</dbReference>
<dbReference type="Pfam" id="PF00406">
    <property type="entry name" value="ADK"/>
    <property type="match status" value="1"/>
</dbReference>
<dbReference type="Pfam" id="PF05191">
    <property type="entry name" value="ADK_lid"/>
    <property type="match status" value="1"/>
</dbReference>
<dbReference type="PRINTS" id="PR00094">
    <property type="entry name" value="ADENYLTKNASE"/>
</dbReference>
<dbReference type="SUPFAM" id="SSF52540">
    <property type="entry name" value="P-loop containing nucleoside triphosphate hydrolases"/>
    <property type="match status" value="1"/>
</dbReference>
<dbReference type="PROSITE" id="PS00113">
    <property type="entry name" value="ADENYLATE_KINASE"/>
    <property type="match status" value="1"/>
</dbReference>
<organism>
    <name type="scientific">Treponema pallidum (strain Nichols)</name>
    <dbReference type="NCBI Taxonomy" id="243276"/>
    <lineage>
        <taxon>Bacteria</taxon>
        <taxon>Pseudomonadati</taxon>
        <taxon>Spirochaetota</taxon>
        <taxon>Spirochaetia</taxon>
        <taxon>Spirochaetales</taxon>
        <taxon>Treponemataceae</taxon>
        <taxon>Treponema</taxon>
    </lineage>
</organism>
<gene>
    <name evidence="1" type="primary">adk</name>
    <name type="ordered locus">TP_0595</name>
</gene>
<comment type="function">
    <text evidence="1">Catalyzes the reversible transfer of the terminal phosphate group between ATP and AMP. Plays an important role in cellular energy homeostasis and in adenine nucleotide metabolism.</text>
</comment>
<comment type="catalytic activity">
    <reaction evidence="1">
        <text>AMP + ATP = 2 ADP</text>
        <dbReference type="Rhea" id="RHEA:12973"/>
        <dbReference type="ChEBI" id="CHEBI:30616"/>
        <dbReference type="ChEBI" id="CHEBI:456215"/>
        <dbReference type="ChEBI" id="CHEBI:456216"/>
        <dbReference type="EC" id="2.7.4.3"/>
    </reaction>
</comment>
<comment type="pathway">
    <text evidence="1">Purine metabolism; AMP biosynthesis via salvage pathway; AMP from ADP: step 1/1.</text>
</comment>
<comment type="subunit">
    <text evidence="1">Monomer.</text>
</comment>
<comment type="subcellular location">
    <subcellularLocation>
        <location evidence="1">Cytoplasm</location>
    </subcellularLocation>
</comment>
<comment type="domain">
    <text evidence="1">Consists of three domains, a large central CORE domain and two small peripheral domains, NMPbind and LID, which undergo movements during catalysis. The LID domain closes over the site of phosphoryl transfer upon ATP binding. Assembling and dissambling the active center during each catalytic cycle provides an effective means to prevent ATP hydrolysis. Some bacteria have evolved a zinc-coordinating structure that stabilizes the LID domain.</text>
</comment>
<comment type="similarity">
    <text evidence="1">Belongs to the adenylate kinase family.</text>
</comment>
<protein>
    <recommendedName>
        <fullName evidence="1">Adenylate kinase</fullName>
        <shortName evidence="1">AK</shortName>
        <ecNumber evidence="1">2.7.4.3</ecNumber>
    </recommendedName>
    <alternativeName>
        <fullName evidence="1">ATP-AMP transphosphorylase</fullName>
    </alternativeName>
    <alternativeName>
        <fullName evidence="1">ATP:AMP phosphotransferase</fullName>
    </alternativeName>
    <alternativeName>
        <fullName evidence="1">Adenylate monophosphate kinase</fullName>
    </alternativeName>
</protein>
<accession>O83604</accession>
<sequence length="211" mass="22933">MRFVFLGPPGAGKGTLAGEISGRCGVVHISTGGILRAAIQKQTALGKKVQKVVEVGGLVDDQTVTELVRERVSHEDVVSGFILDGFPRTVTQARCLEDIVPIDYAVSIVVPDDVLVARLTGRRVCSACGSSYHVLFAQPKREGVCDRCRGVLVVREDDKMSAILQRLTAYRAQAEPIVHFYSERGKLVSLNGAPPISDVVLEFQERFAQSR</sequence>
<feature type="chain" id="PRO_0000158878" description="Adenylate kinase">
    <location>
        <begin position="1"/>
        <end position="211"/>
    </location>
</feature>
<feature type="region of interest" description="NMP" evidence="1">
    <location>
        <begin position="30"/>
        <end position="59"/>
    </location>
</feature>
<feature type="region of interest" description="LID" evidence="1">
    <location>
        <begin position="121"/>
        <end position="158"/>
    </location>
</feature>
<feature type="binding site" evidence="1">
    <location>
        <begin position="10"/>
        <end position="15"/>
    </location>
    <ligand>
        <name>ATP</name>
        <dbReference type="ChEBI" id="CHEBI:30616"/>
    </ligand>
</feature>
<feature type="binding site" evidence="1">
    <location>
        <position position="31"/>
    </location>
    <ligand>
        <name>AMP</name>
        <dbReference type="ChEBI" id="CHEBI:456215"/>
    </ligand>
</feature>
<feature type="binding site" evidence="1">
    <location>
        <position position="36"/>
    </location>
    <ligand>
        <name>AMP</name>
        <dbReference type="ChEBI" id="CHEBI:456215"/>
    </ligand>
</feature>
<feature type="binding site" evidence="1">
    <location>
        <begin position="57"/>
        <end position="59"/>
    </location>
    <ligand>
        <name>AMP</name>
        <dbReference type="ChEBI" id="CHEBI:456215"/>
    </ligand>
</feature>
<feature type="binding site" evidence="1">
    <location>
        <begin position="85"/>
        <end position="88"/>
    </location>
    <ligand>
        <name>AMP</name>
        <dbReference type="ChEBI" id="CHEBI:456215"/>
    </ligand>
</feature>
<feature type="binding site" evidence="1">
    <location>
        <position position="92"/>
    </location>
    <ligand>
        <name>AMP</name>
        <dbReference type="ChEBI" id="CHEBI:456215"/>
    </ligand>
</feature>
<feature type="binding site" evidence="1">
    <location>
        <position position="122"/>
    </location>
    <ligand>
        <name>ATP</name>
        <dbReference type="ChEBI" id="CHEBI:30616"/>
    </ligand>
</feature>
<feature type="binding site" evidence="1">
    <location>
        <position position="125"/>
    </location>
    <ligand>
        <name>Zn(2+)</name>
        <dbReference type="ChEBI" id="CHEBI:29105"/>
        <note>structural</note>
    </ligand>
</feature>
<feature type="binding site" evidence="1">
    <location>
        <position position="128"/>
    </location>
    <ligand>
        <name>Zn(2+)</name>
        <dbReference type="ChEBI" id="CHEBI:29105"/>
        <note>structural</note>
    </ligand>
</feature>
<feature type="binding site" evidence="1">
    <location>
        <begin position="131"/>
        <end position="132"/>
    </location>
    <ligand>
        <name>ATP</name>
        <dbReference type="ChEBI" id="CHEBI:30616"/>
    </ligand>
</feature>
<feature type="binding site" evidence="1">
    <location>
        <position position="145"/>
    </location>
    <ligand>
        <name>Zn(2+)</name>
        <dbReference type="ChEBI" id="CHEBI:29105"/>
        <note>structural</note>
    </ligand>
</feature>
<feature type="binding site" evidence="1">
    <location>
        <position position="148"/>
    </location>
    <ligand>
        <name>Zn(2+)</name>
        <dbReference type="ChEBI" id="CHEBI:29105"/>
        <note>structural</note>
    </ligand>
</feature>
<feature type="binding site" evidence="1">
    <location>
        <position position="155"/>
    </location>
    <ligand>
        <name>AMP</name>
        <dbReference type="ChEBI" id="CHEBI:456215"/>
    </ligand>
</feature>
<feature type="binding site" evidence="1">
    <location>
        <position position="166"/>
    </location>
    <ligand>
        <name>AMP</name>
        <dbReference type="ChEBI" id="CHEBI:456215"/>
    </ligand>
</feature>
<feature type="binding site" evidence="1">
    <location>
        <position position="194"/>
    </location>
    <ligand>
        <name>ATP</name>
        <dbReference type="ChEBI" id="CHEBI:30616"/>
    </ligand>
</feature>
<keyword id="KW-0067">ATP-binding</keyword>
<keyword id="KW-0963">Cytoplasm</keyword>
<keyword id="KW-0418">Kinase</keyword>
<keyword id="KW-0479">Metal-binding</keyword>
<keyword id="KW-0545">Nucleotide biosynthesis</keyword>
<keyword id="KW-0547">Nucleotide-binding</keyword>
<keyword id="KW-1185">Reference proteome</keyword>
<keyword id="KW-0808">Transferase</keyword>
<keyword id="KW-0862">Zinc</keyword>